<organism>
    <name type="scientific">Homo sapiens</name>
    <name type="common">Human</name>
    <dbReference type="NCBI Taxonomy" id="9606"/>
    <lineage>
        <taxon>Eukaryota</taxon>
        <taxon>Metazoa</taxon>
        <taxon>Chordata</taxon>
        <taxon>Craniata</taxon>
        <taxon>Vertebrata</taxon>
        <taxon>Euteleostomi</taxon>
        <taxon>Mammalia</taxon>
        <taxon>Eutheria</taxon>
        <taxon>Euarchontoglires</taxon>
        <taxon>Primates</taxon>
        <taxon>Haplorrhini</taxon>
        <taxon>Catarrhini</taxon>
        <taxon>Hominidae</taxon>
        <taxon>Homo</taxon>
    </lineage>
</organism>
<keyword id="KW-0002">3D-structure</keyword>
<keyword id="KW-0007">Acetylation</keyword>
<keyword id="KW-0235">DNA replication</keyword>
<keyword id="KW-1017">Isopeptide bond</keyword>
<keyword id="KW-0539">Nucleus</keyword>
<keyword id="KW-0597">Phosphoprotein</keyword>
<keyword id="KW-1267">Proteomics identification</keyword>
<keyword id="KW-1185">Reference proteome</keyword>
<keyword id="KW-0832">Ubl conjugation</keyword>
<accession>Q9H9A7</accession>
<accession>Q05BX1</accession>
<accession>Q05CW3</accession>
<accession>Q5SQG8</accession>
<accession>Q5SQG9</accession>
<accession>Q6P1Q4</accession>
<accession>Q6PI89</accession>
<accession>Q7Z6L6</accession>
<name>RMI1_HUMAN</name>
<feature type="chain" id="PRO_0000227546" description="RecQ-mediated genome instability protein 1">
    <location>
        <begin position="1"/>
        <end position="625"/>
    </location>
</feature>
<feature type="region of interest" description="Disordered" evidence="1">
    <location>
        <begin position="257"/>
        <end position="282"/>
    </location>
</feature>
<feature type="modified residue" description="N-acetylmethionine" evidence="12">
    <location>
        <position position="1"/>
    </location>
</feature>
<feature type="modified residue" description="Phosphoserine" evidence="11">
    <location>
        <position position="225"/>
    </location>
</feature>
<feature type="modified residue" description="Phosphoserine" evidence="13">
    <location>
        <position position="284"/>
    </location>
</feature>
<feature type="modified residue" description="Phosphoserine" evidence="13">
    <location>
        <position position="292"/>
    </location>
</feature>
<feature type="cross-link" description="Glycyl lysine isopeptide (Lys-Gly) (interchain with G-Cter in SUMO2)" evidence="15">
    <location>
        <position position="334"/>
    </location>
</feature>
<feature type="cross-link" description="Glycyl lysine isopeptide (Lys-Gly) (interchain with G-Cter in SUMO2)" evidence="15">
    <location>
        <position position="387"/>
    </location>
</feature>
<feature type="cross-link" description="Glycyl lysine isopeptide (Lys-Gly) (interchain with G-Cter in SUMO2)" evidence="14 15">
    <location>
        <position position="426"/>
    </location>
</feature>
<feature type="sequence variant" id="VAR_025556" description="In dbSNP:rs17855932." evidence="3">
    <original>Y</original>
    <variation>H</variation>
    <location>
        <position position="100"/>
    </location>
</feature>
<feature type="sequence variant" id="VAR_025557" description="In dbSNP:rs1982151." evidence="2 3">
    <original>N</original>
    <variation>S</variation>
    <location>
        <position position="455"/>
    </location>
</feature>
<feature type="sequence conflict" description="In Ref. 1; BAB14325." evidence="10" ref="1">
    <original>E</original>
    <variation>G</variation>
    <location>
        <position position="11"/>
    </location>
</feature>
<feature type="sequence conflict" description="In Ref. 1; BAB14325." evidence="10" ref="1">
    <original>A</original>
    <variation>T</variation>
    <location>
        <position position="259"/>
    </location>
</feature>
<feature type="sequence conflict" description="In Ref. 3; AAH20606." evidence="10" ref="3">
    <original>E</original>
    <variation>D</variation>
    <location>
        <position position="318"/>
    </location>
</feature>
<feature type="sequence conflict" description="In Ref. 3; AAH39999." evidence="10" ref="3">
    <original>L</original>
    <variation>F</variation>
    <location>
        <position position="443"/>
    </location>
</feature>
<feature type="helix" evidence="17">
    <location>
        <begin position="3"/>
        <end position="18"/>
    </location>
</feature>
<feature type="helix" evidence="17">
    <location>
        <begin position="24"/>
        <end position="38"/>
    </location>
</feature>
<feature type="helix" evidence="17">
    <location>
        <begin position="45"/>
        <end position="57"/>
    </location>
</feature>
<feature type="helix" evidence="17">
    <location>
        <begin position="61"/>
        <end position="64"/>
    </location>
</feature>
<feature type="turn" evidence="17">
    <location>
        <begin position="71"/>
        <end position="75"/>
    </location>
</feature>
<feature type="strand" evidence="17">
    <location>
        <begin position="77"/>
        <end position="95"/>
    </location>
</feature>
<feature type="helix" evidence="17">
    <location>
        <begin position="96"/>
        <end position="108"/>
    </location>
</feature>
<feature type="helix" evidence="18">
    <location>
        <begin position="113"/>
        <end position="115"/>
    </location>
</feature>
<feature type="helix" evidence="19">
    <location>
        <begin position="126"/>
        <end position="129"/>
    </location>
</feature>
<feature type="strand" evidence="17">
    <location>
        <begin position="135"/>
        <end position="143"/>
    </location>
</feature>
<feature type="strand" evidence="17">
    <location>
        <begin position="145"/>
        <end position="150"/>
    </location>
</feature>
<feature type="strand" evidence="17">
    <location>
        <begin position="166"/>
        <end position="176"/>
    </location>
</feature>
<feature type="strand" evidence="17">
    <location>
        <begin position="179"/>
        <end position="182"/>
    </location>
</feature>
<feature type="helix" evidence="17">
    <location>
        <begin position="184"/>
        <end position="186"/>
    </location>
</feature>
<feature type="strand" evidence="17">
    <location>
        <begin position="187"/>
        <end position="191"/>
    </location>
</feature>
<feature type="helix" evidence="17">
    <location>
        <begin position="195"/>
        <end position="201"/>
    </location>
</feature>
<feature type="helix" evidence="18">
    <location>
        <begin position="203"/>
        <end position="210"/>
    </location>
</feature>
<feature type="helix" evidence="20">
    <location>
        <begin position="244"/>
        <end position="250"/>
    </location>
</feature>
<feature type="helix" evidence="20">
    <location>
        <begin position="253"/>
        <end position="258"/>
    </location>
</feature>
<feature type="helix" evidence="16">
    <location>
        <begin position="480"/>
        <end position="482"/>
    </location>
</feature>
<feature type="helix" evidence="16">
    <location>
        <begin position="483"/>
        <end position="487"/>
    </location>
</feature>
<feature type="helix" evidence="16">
    <location>
        <begin position="494"/>
        <end position="499"/>
    </location>
</feature>
<feature type="strand" evidence="16">
    <location>
        <begin position="506"/>
        <end position="517"/>
    </location>
</feature>
<feature type="helix" evidence="16">
    <location>
        <begin position="524"/>
        <end position="526"/>
    </location>
</feature>
<feature type="strand" evidence="16">
    <location>
        <begin position="531"/>
        <end position="535"/>
    </location>
</feature>
<feature type="strand" evidence="16">
    <location>
        <begin position="540"/>
        <end position="545"/>
    </location>
</feature>
<feature type="helix" evidence="16">
    <location>
        <begin position="547"/>
        <end position="554"/>
    </location>
</feature>
<feature type="helix" evidence="16">
    <location>
        <begin position="558"/>
        <end position="564"/>
    </location>
</feature>
<feature type="helix" evidence="16">
    <location>
        <begin position="568"/>
        <end position="587"/>
    </location>
</feature>
<feature type="strand" evidence="16">
    <location>
        <begin position="589"/>
        <end position="597"/>
    </location>
</feature>
<feature type="turn" evidence="16">
    <location>
        <begin position="598"/>
        <end position="601"/>
    </location>
</feature>
<feature type="strand" evidence="16">
    <location>
        <begin position="602"/>
        <end position="609"/>
    </location>
</feature>
<feature type="helix" evidence="16">
    <location>
        <begin position="613"/>
        <end position="622"/>
    </location>
</feature>
<evidence type="ECO:0000256" key="1">
    <source>
        <dbReference type="SAM" id="MobiDB-lite"/>
    </source>
</evidence>
<evidence type="ECO:0000269" key="2">
    <source>
    </source>
</evidence>
<evidence type="ECO:0000269" key="3">
    <source>
    </source>
</evidence>
<evidence type="ECO:0000269" key="4">
    <source>
    </source>
</evidence>
<evidence type="ECO:0000269" key="5">
    <source>
    </source>
</evidence>
<evidence type="ECO:0000269" key="6">
    <source>
    </source>
</evidence>
<evidence type="ECO:0000269" key="7">
    <source>
    </source>
</evidence>
<evidence type="ECO:0000269" key="8">
    <source>
    </source>
</evidence>
<evidence type="ECO:0000269" key="9">
    <source>
    </source>
</evidence>
<evidence type="ECO:0000305" key="10"/>
<evidence type="ECO:0007744" key="11">
    <source>
    </source>
</evidence>
<evidence type="ECO:0007744" key="12">
    <source>
    </source>
</evidence>
<evidence type="ECO:0007744" key="13">
    <source>
    </source>
</evidence>
<evidence type="ECO:0007744" key="14">
    <source>
    </source>
</evidence>
<evidence type="ECO:0007744" key="15">
    <source>
    </source>
</evidence>
<evidence type="ECO:0007829" key="16">
    <source>
        <dbReference type="PDB" id="3MXN"/>
    </source>
</evidence>
<evidence type="ECO:0007829" key="17">
    <source>
        <dbReference type="PDB" id="3NBI"/>
    </source>
</evidence>
<evidence type="ECO:0007829" key="18">
    <source>
        <dbReference type="PDB" id="4CGY"/>
    </source>
</evidence>
<evidence type="ECO:0007829" key="19">
    <source>
        <dbReference type="PDB" id="4CHT"/>
    </source>
</evidence>
<evidence type="ECO:0007829" key="20">
    <source>
        <dbReference type="PDB" id="7XUV"/>
    </source>
</evidence>
<dbReference type="EMBL" id="AK022950">
    <property type="protein sequence ID" value="BAB14325.1"/>
    <property type="molecule type" value="mRNA"/>
</dbReference>
<dbReference type="EMBL" id="AL732446">
    <property type="status" value="NOT_ANNOTATED_CDS"/>
    <property type="molecule type" value="Genomic_DNA"/>
</dbReference>
<dbReference type="EMBL" id="BC020606">
    <property type="protein sequence ID" value="AAH20606.1"/>
    <property type="status" value="ALT_SEQ"/>
    <property type="molecule type" value="mRNA"/>
</dbReference>
<dbReference type="EMBL" id="BC032494">
    <property type="protein sequence ID" value="AAH32494.1"/>
    <property type="status" value="ALT_SEQ"/>
    <property type="molecule type" value="mRNA"/>
</dbReference>
<dbReference type="EMBL" id="BC039999">
    <property type="protein sequence ID" value="AAH39999.1"/>
    <property type="status" value="ALT_FRAME"/>
    <property type="molecule type" value="mRNA"/>
</dbReference>
<dbReference type="EMBL" id="BC053549">
    <property type="protein sequence ID" value="AAH53549.1"/>
    <property type="status" value="ALT_SEQ"/>
    <property type="molecule type" value="mRNA"/>
</dbReference>
<dbReference type="EMBL" id="BC064937">
    <property type="protein sequence ID" value="AAH64937.1"/>
    <property type="status" value="ALT_FRAME"/>
    <property type="molecule type" value="mRNA"/>
</dbReference>
<dbReference type="CCDS" id="CCDS6669.1"/>
<dbReference type="RefSeq" id="NP_001345220.1">
    <property type="nucleotide sequence ID" value="NM_001358291.2"/>
</dbReference>
<dbReference type="RefSeq" id="NP_001345221.1">
    <property type="nucleotide sequence ID" value="NM_001358292.2"/>
</dbReference>
<dbReference type="RefSeq" id="NP_001345222.1">
    <property type="nucleotide sequence ID" value="NM_001358293.2"/>
</dbReference>
<dbReference type="RefSeq" id="NP_001345223.1">
    <property type="nucleotide sequence ID" value="NM_001358294.2"/>
</dbReference>
<dbReference type="RefSeq" id="NP_079221.2">
    <property type="nucleotide sequence ID" value="NM_024945.3"/>
</dbReference>
<dbReference type="RefSeq" id="XP_005252268.1">
    <property type="nucleotide sequence ID" value="XM_005252211.2"/>
</dbReference>
<dbReference type="RefSeq" id="XP_005252270.1">
    <property type="nucleotide sequence ID" value="XM_005252213.2"/>
</dbReference>
<dbReference type="RefSeq" id="XP_011517336.1">
    <property type="nucleotide sequence ID" value="XM_011519034.2"/>
</dbReference>
<dbReference type="RefSeq" id="XP_016870629.1">
    <property type="nucleotide sequence ID" value="XM_017015140.2"/>
</dbReference>
<dbReference type="PDB" id="3MXN">
    <property type="method" value="X-ray"/>
    <property type="resolution" value="1.55 A"/>
    <property type="chains" value="A=473-625"/>
</dbReference>
<dbReference type="PDB" id="3NBH">
    <property type="method" value="X-ray"/>
    <property type="resolution" value="2.00 A"/>
    <property type="chains" value="A=475-625"/>
</dbReference>
<dbReference type="PDB" id="3NBI">
    <property type="method" value="X-ray"/>
    <property type="resolution" value="2.00 A"/>
    <property type="chains" value="A=2-213"/>
</dbReference>
<dbReference type="PDB" id="4CGY">
    <property type="method" value="X-ray"/>
    <property type="resolution" value="2.85 A"/>
    <property type="chains" value="B=1-219"/>
</dbReference>
<dbReference type="PDB" id="4CHT">
    <property type="method" value="X-ray"/>
    <property type="resolution" value="3.25 A"/>
    <property type="chains" value="B=1-219"/>
</dbReference>
<dbReference type="PDB" id="4DAY">
    <property type="method" value="X-ray"/>
    <property type="resolution" value="3.30 A"/>
    <property type="chains" value="A=473-625"/>
</dbReference>
<dbReference type="PDB" id="7XUV">
    <property type="method" value="X-ray"/>
    <property type="resolution" value="1.60 A"/>
    <property type="chains" value="B=243-262"/>
</dbReference>
<dbReference type="PDBsum" id="3MXN"/>
<dbReference type="PDBsum" id="3NBH"/>
<dbReference type="PDBsum" id="3NBI"/>
<dbReference type="PDBsum" id="4CGY"/>
<dbReference type="PDBsum" id="4CHT"/>
<dbReference type="PDBsum" id="4DAY"/>
<dbReference type="PDBsum" id="7XUV"/>
<dbReference type="SMR" id="Q9H9A7"/>
<dbReference type="BioGRID" id="123066">
    <property type="interactions" value="40"/>
</dbReference>
<dbReference type="ComplexPortal" id="CPX-3301">
    <property type="entry name" value="BTR double Holliday Junction dissolution complex"/>
</dbReference>
<dbReference type="CORUM" id="Q9H9A7"/>
<dbReference type="DIP" id="DIP-33324N"/>
<dbReference type="FunCoup" id="Q9H9A7">
    <property type="interactions" value="3046"/>
</dbReference>
<dbReference type="IntAct" id="Q9H9A7">
    <property type="interactions" value="26"/>
</dbReference>
<dbReference type="MINT" id="Q9H9A7"/>
<dbReference type="STRING" id="9606.ENSP00000317039"/>
<dbReference type="iPTMnet" id="Q9H9A7"/>
<dbReference type="PhosphoSitePlus" id="Q9H9A7"/>
<dbReference type="BioMuta" id="RMI1"/>
<dbReference type="DMDM" id="322510109"/>
<dbReference type="jPOST" id="Q9H9A7"/>
<dbReference type="MassIVE" id="Q9H9A7"/>
<dbReference type="PaxDb" id="9606-ENSP00000317039"/>
<dbReference type="PeptideAtlas" id="Q9H9A7"/>
<dbReference type="ProteomicsDB" id="81306"/>
<dbReference type="Pumba" id="Q9H9A7"/>
<dbReference type="Antibodypedia" id="27643">
    <property type="antibodies" value="169 antibodies from 24 providers"/>
</dbReference>
<dbReference type="DNASU" id="80010"/>
<dbReference type="Ensembl" id="ENST00000325875.7">
    <property type="protein sequence ID" value="ENSP00000317039.3"/>
    <property type="gene ID" value="ENSG00000178966.17"/>
</dbReference>
<dbReference type="Ensembl" id="ENST00000445877.6">
    <property type="protein sequence ID" value="ENSP00000402433.2"/>
    <property type="gene ID" value="ENSG00000178966.17"/>
</dbReference>
<dbReference type="GeneID" id="80010"/>
<dbReference type="KEGG" id="hsa:80010"/>
<dbReference type="MANE-Select" id="ENST00000445877.6">
    <property type="protein sequence ID" value="ENSP00000402433.2"/>
    <property type="RefSeq nucleotide sequence ID" value="NM_001358291.2"/>
    <property type="RefSeq protein sequence ID" value="NP_001345220.1"/>
</dbReference>
<dbReference type="UCSC" id="uc004anq.5">
    <property type="organism name" value="human"/>
</dbReference>
<dbReference type="AGR" id="HGNC:25764"/>
<dbReference type="CTD" id="80010"/>
<dbReference type="DisGeNET" id="80010"/>
<dbReference type="GeneCards" id="RMI1"/>
<dbReference type="HGNC" id="HGNC:25764">
    <property type="gene designation" value="RMI1"/>
</dbReference>
<dbReference type="HPA" id="ENSG00000178966">
    <property type="expression patterns" value="Low tissue specificity"/>
</dbReference>
<dbReference type="MIM" id="610404">
    <property type="type" value="gene"/>
</dbReference>
<dbReference type="neXtProt" id="NX_Q9H9A7"/>
<dbReference type="OpenTargets" id="ENSG00000178966"/>
<dbReference type="PharmGKB" id="PA134939007"/>
<dbReference type="VEuPathDB" id="HostDB:ENSG00000178966"/>
<dbReference type="eggNOG" id="KOG3683">
    <property type="taxonomic scope" value="Eukaryota"/>
</dbReference>
<dbReference type="GeneTree" id="ENSGT00940000161055"/>
<dbReference type="InParanoid" id="Q9H9A7"/>
<dbReference type="OMA" id="SATWHVK"/>
<dbReference type="OrthoDB" id="341511at2759"/>
<dbReference type="PAN-GO" id="Q9H9A7">
    <property type="GO annotations" value="4 GO annotations based on evolutionary models"/>
</dbReference>
<dbReference type="PhylomeDB" id="Q9H9A7"/>
<dbReference type="TreeFam" id="TF316491"/>
<dbReference type="PathwayCommons" id="Q9H9A7"/>
<dbReference type="Reactome" id="R-HSA-5685938">
    <property type="pathway name" value="HDR through Single Strand Annealing (SSA)"/>
</dbReference>
<dbReference type="Reactome" id="R-HSA-5685942">
    <property type="pathway name" value="HDR through Homologous Recombination (HRR)"/>
</dbReference>
<dbReference type="Reactome" id="R-HSA-5693554">
    <property type="pathway name" value="Resolution of D-loop Structures through Synthesis-Dependent Strand Annealing (SDSA)"/>
</dbReference>
<dbReference type="Reactome" id="R-HSA-5693568">
    <property type="pathway name" value="Resolution of D-loop Structures through Holliday Junction Intermediates"/>
</dbReference>
<dbReference type="Reactome" id="R-HSA-5693579">
    <property type="pathway name" value="Homologous DNA Pairing and Strand Exchange"/>
</dbReference>
<dbReference type="Reactome" id="R-HSA-5693607">
    <property type="pathway name" value="Processing of DNA double-strand break ends"/>
</dbReference>
<dbReference type="Reactome" id="R-HSA-5693616">
    <property type="pathway name" value="Presynaptic phase of homologous DNA pairing and strand exchange"/>
</dbReference>
<dbReference type="Reactome" id="R-HSA-6804756">
    <property type="pathway name" value="Regulation of TP53 Activity through Phosphorylation"/>
</dbReference>
<dbReference type="Reactome" id="R-HSA-69473">
    <property type="pathway name" value="G2/M DNA damage checkpoint"/>
</dbReference>
<dbReference type="Reactome" id="R-HSA-9701192">
    <property type="pathway name" value="Defective homologous recombination repair (HRR) due to BRCA1 loss of function"/>
</dbReference>
<dbReference type="Reactome" id="R-HSA-9704331">
    <property type="pathway name" value="Defective HDR through Homologous Recombination Repair (HRR) due to PALB2 loss of BRCA1 binding function"/>
</dbReference>
<dbReference type="Reactome" id="R-HSA-9704646">
    <property type="pathway name" value="Defective HDR through Homologous Recombination Repair (HRR) due to PALB2 loss of BRCA2/RAD51/RAD51C binding function"/>
</dbReference>
<dbReference type="Reactome" id="R-HSA-9709570">
    <property type="pathway name" value="Impaired BRCA2 binding to RAD51"/>
</dbReference>
<dbReference type="Reactome" id="R-HSA-9709603">
    <property type="pathway name" value="Impaired BRCA2 binding to PALB2"/>
</dbReference>
<dbReference type="SignaLink" id="Q9H9A7"/>
<dbReference type="BioGRID-ORCS" id="80010">
    <property type="hits" value="481 hits in 1162 CRISPR screens"/>
</dbReference>
<dbReference type="EvolutionaryTrace" id="Q9H9A7"/>
<dbReference type="GeneWiki" id="RMI1"/>
<dbReference type="GenomeRNAi" id="80010"/>
<dbReference type="Pharos" id="Q9H9A7">
    <property type="development level" value="Tbio"/>
</dbReference>
<dbReference type="PRO" id="PR:Q9H9A7"/>
<dbReference type="Proteomes" id="UP000005640">
    <property type="component" value="Chromosome 9"/>
</dbReference>
<dbReference type="RNAct" id="Q9H9A7">
    <property type="molecule type" value="protein"/>
</dbReference>
<dbReference type="Bgee" id="ENSG00000178966">
    <property type="expression patterns" value="Expressed in oocyte and 192 other cell types or tissues"/>
</dbReference>
<dbReference type="ExpressionAtlas" id="Q9H9A7">
    <property type="expression patterns" value="baseline and differential"/>
</dbReference>
<dbReference type="GO" id="GO:0016604">
    <property type="term" value="C:nuclear body"/>
    <property type="evidence" value="ECO:0000314"/>
    <property type="project" value="HPA"/>
</dbReference>
<dbReference type="GO" id="GO:0005654">
    <property type="term" value="C:nucleoplasm"/>
    <property type="evidence" value="ECO:0000314"/>
    <property type="project" value="HPA"/>
</dbReference>
<dbReference type="GO" id="GO:0005634">
    <property type="term" value="C:nucleus"/>
    <property type="evidence" value="ECO:0000303"/>
    <property type="project" value="ComplexPortal"/>
</dbReference>
<dbReference type="GO" id="GO:0031422">
    <property type="term" value="C:RecQ family helicase-topoisomerase III complex"/>
    <property type="evidence" value="ECO:0000353"/>
    <property type="project" value="ComplexPortal"/>
</dbReference>
<dbReference type="GO" id="GO:0000166">
    <property type="term" value="F:nucleotide binding"/>
    <property type="evidence" value="ECO:0007669"/>
    <property type="project" value="InterPro"/>
</dbReference>
<dbReference type="GO" id="GO:0006260">
    <property type="term" value="P:DNA replication"/>
    <property type="evidence" value="ECO:0007669"/>
    <property type="project" value="UniProtKB-KW"/>
</dbReference>
<dbReference type="GO" id="GO:0000724">
    <property type="term" value="P:double-strand break repair via homologous recombination"/>
    <property type="evidence" value="ECO:0000314"/>
    <property type="project" value="ComplexPortal"/>
</dbReference>
<dbReference type="GO" id="GO:0042593">
    <property type="term" value="P:glucose homeostasis"/>
    <property type="evidence" value="ECO:0007669"/>
    <property type="project" value="Ensembl"/>
</dbReference>
<dbReference type="GO" id="GO:0035264">
    <property type="term" value="P:multicellular organism growth"/>
    <property type="evidence" value="ECO:0007669"/>
    <property type="project" value="Ensembl"/>
</dbReference>
<dbReference type="GO" id="GO:0002023">
    <property type="term" value="P:reduction of food intake in response to dietary excess"/>
    <property type="evidence" value="ECO:0007669"/>
    <property type="project" value="Ensembl"/>
</dbReference>
<dbReference type="GO" id="GO:0071139">
    <property type="term" value="P:resolution of DNA recombination intermediates"/>
    <property type="evidence" value="ECO:0000314"/>
    <property type="project" value="ComplexPortal"/>
</dbReference>
<dbReference type="GO" id="GO:0000712">
    <property type="term" value="P:resolution of meiotic recombination intermediates"/>
    <property type="evidence" value="ECO:0000318"/>
    <property type="project" value="GO_Central"/>
</dbReference>
<dbReference type="GO" id="GO:0009749">
    <property type="term" value="P:response to glucose"/>
    <property type="evidence" value="ECO:0007669"/>
    <property type="project" value="Ensembl"/>
</dbReference>
<dbReference type="FunFam" id="1.10.8.1020:FF:000001">
    <property type="entry name" value="RecQ-mediated genome instability protein 1"/>
    <property type="match status" value="1"/>
</dbReference>
<dbReference type="FunFam" id="2.40.50.510:FF:000001">
    <property type="entry name" value="RecQ-mediated genome instability protein 1"/>
    <property type="match status" value="1"/>
</dbReference>
<dbReference type="FunFam" id="2.40.50.770:FF:000002">
    <property type="entry name" value="recQ-mediated genome instability protein 1"/>
    <property type="match status" value="1"/>
</dbReference>
<dbReference type="Gene3D" id="2.40.50.510">
    <property type="match status" value="2"/>
</dbReference>
<dbReference type="Gene3D" id="1.10.8.1020">
    <property type="entry name" value="RecQ-mediated genome instability protein 1, N-terminal domain"/>
    <property type="match status" value="1"/>
</dbReference>
<dbReference type="Gene3D" id="2.40.50.770">
    <property type="entry name" value="RecQ-mediated genome instability protein Rmi1, C-terminal domain"/>
    <property type="match status" value="1"/>
</dbReference>
<dbReference type="IDEAL" id="IID00421"/>
<dbReference type="InterPro" id="IPR032199">
    <property type="entry name" value="RMI1_C"/>
</dbReference>
<dbReference type="InterPro" id="IPR049363">
    <property type="entry name" value="RMI1_N"/>
</dbReference>
<dbReference type="InterPro" id="IPR042470">
    <property type="entry name" value="RMI1_N_C_sf"/>
</dbReference>
<dbReference type="InterPro" id="IPR044881">
    <property type="entry name" value="RMI1_N_N_sf"/>
</dbReference>
<dbReference type="InterPro" id="IPR013894">
    <property type="entry name" value="RMI1_OB"/>
</dbReference>
<dbReference type="PANTHER" id="PTHR14790:SF15">
    <property type="entry name" value="RECQ-MEDIATED GENOME INSTABILITY PROTEIN 1"/>
    <property type="match status" value="1"/>
</dbReference>
<dbReference type="PANTHER" id="PTHR14790">
    <property type="entry name" value="RECQ-MEDIATED GENOME INSTABILITY PROTEIN 1 RMI1"/>
    <property type="match status" value="1"/>
</dbReference>
<dbReference type="Pfam" id="PF16099">
    <property type="entry name" value="RMI1_C"/>
    <property type="match status" value="1"/>
</dbReference>
<dbReference type="Pfam" id="PF08585">
    <property type="entry name" value="RMI1_N_C"/>
    <property type="match status" value="1"/>
</dbReference>
<dbReference type="Pfam" id="PF21000">
    <property type="entry name" value="RMI1_N_N"/>
    <property type="match status" value="1"/>
</dbReference>
<dbReference type="SMART" id="SM01161">
    <property type="entry name" value="DUF1767"/>
    <property type="match status" value="1"/>
</dbReference>
<gene>
    <name type="primary">RMI1</name>
    <name type="synonym">C9orf76</name>
</gene>
<comment type="function">
    <text evidence="4 5 6">Essential component of the RMI complex, a complex that plays an important role in the processing of homologous recombination intermediates to limit DNA crossover formation in cells. Promotes TOP3A binding to double Holliday junctions (DHJ) and hence stimulates TOP3A-mediated dissolution. Required for BLM phosphorylation during mitosis. Within the BLM complex, required for BLM and TOP3A stability.</text>
</comment>
<comment type="subunit">
    <text evidence="4 5 6 7 8 9">Component of the RMI complex, containing at least TOP3A, RMI1 and RMI2. The RMI complex interacts with BLM. Directly interacts with RMI2 and TOP3A. May bind DHJ. Interacts (via N-terminal region) with BLM; the interaction is direct.</text>
</comment>
<comment type="interaction">
    <interactant intactId="EBI-621339">
        <id>Q9H9A7</id>
    </interactant>
    <interactant intactId="EBI-621372">
        <id>P54132</id>
        <label>BLM</label>
    </interactant>
    <organismsDiffer>false</organismsDiffer>
    <experiments>16</experiments>
</comment>
<comment type="interaction">
    <interactant intactId="EBI-621339">
        <id>Q9H9A7</id>
    </interactant>
    <interactant intactId="EBI-2555534">
        <id>Q96E14</id>
        <label>RMI2</label>
    </interactant>
    <organismsDiffer>false</organismsDiffer>
    <experiments>5</experiments>
</comment>
<comment type="interaction">
    <interactant intactId="EBI-621339">
        <id>Q9H9A7</id>
    </interactant>
    <interactant intactId="EBI-15876491">
        <id>Q96E14-1</id>
        <label>RMI2</label>
    </interactant>
    <organismsDiffer>false</organismsDiffer>
    <experiments>13</experiments>
</comment>
<comment type="interaction">
    <interactant intactId="EBI-621339">
        <id>Q9H9A7</id>
    </interactant>
    <interactant intactId="EBI-621345">
        <id>Q13472</id>
        <label>TOP3A</label>
    </interactant>
    <organismsDiffer>false</organismsDiffer>
    <experiments>11</experiments>
</comment>
<comment type="subcellular location">
    <subcellularLocation>
        <location evidence="4">Nucleus</location>
    </subcellularLocation>
    <text>Forms foci in response to DNA damage.</text>
</comment>
<comment type="similarity">
    <text evidence="10">Belongs to the RMI1 family.</text>
</comment>
<comment type="sequence caution" evidence="10">
    <conflict type="miscellaneous discrepancy">
        <sequence resource="EMBL-CDS" id="AAH20606"/>
    </conflict>
    <text>Contaminating sequence. Potential poly-A sequence.</text>
</comment>
<comment type="sequence caution" evidence="10">
    <conflict type="miscellaneous discrepancy">
        <sequence resource="EMBL-CDS" id="AAH32494"/>
    </conflict>
    <text>Contaminating sequence. Potential poly-A sequence.</text>
</comment>
<comment type="sequence caution" evidence="10">
    <conflict type="frameshift">
        <sequence resource="EMBL-CDS" id="AAH39999"/>
    </conflict>
</comment>
<comment type="sequence caution" evidence="10">
    <conflict type="miscellaneous discrepancy">
        <sequence resource="EMBL-CDS" id="AAH53549"/>
    </conflict>
    <text>Contaminating sequence. Potential poly-A sequence.</text>
</comment>
<comment type="sequence caution" evidence="10">
    <conflict type="frameshift">
        <sequence resource="EMBL-CDS" id="AAH64937"/>
    </conflict>
</comment>
<proteinExistence type="evidence at protein level"/>
<reference key="1">
    <citation type="journal article" date="2004" name="Nat. Genet.">
        <title>Complete sequencing and characterization of 21,243 full-length human cDNAs.</title>
        <authorList>
            <person name="Ota T."/>
            <person name="Suzuki Y."/>
            <person name="Nishikawa T."/>
            <person name="Otsuki T."/>
            <person name="Sugiyama T."/>
            <person name="Irie R."/>
            <person name="Wakamatsu A."/>
            <person name="Hayashi K."/>
            <person name="Sato H."/>
            <person name="Nagai K."/>
            <person name="Kimura K."/>
            <person name="Makita H."/>
            <person name="Sekine M."/>
            <person name="Obayashi M."/>
            <person name="Nishi T."/>
            <person name="Shibahara T."/>
            <person name="Tanaka T."/>
            <person name="Ishii S."/>
            <person name="Yamamoto J."/>
            <person name="Saito K."/>
            <person name="Kawai Y."/>
            <person name="Isono Y."/>
            <person name="Nakamura Y."/>
            <person name="Nagahari K."/>
            <person name="Murakami K."/>
            <person name="Yasuda T."/>
            <person name="Iwayanagi T."/>
            <person name="Wagatsuma M."/>
            <person name="Shiratori A."/>
            <person name="Sudo H."/>
            <person name="Hosoiri T."/>
            <person name="Kaku Y."/>
            <person name="Kodaira H."/>
            <person name="Kondo H."/>
            <person name="Sugawara M."/>
            <person name="Takahashi M."/>
            <person name="Kanda K."/>
            <person name="Yokoi T."/>
            <person name="Furuya T."/>
            <person name="Kikkawa E."/>
            <person name="Omura Y."/>
            <person name="Abe K."/>
            <person name="Kamihara K."/>
            <person name="Katsuta N."/>
            <person name="Sato K."/>
            <person name="Tanikawa M."/>
            <person name="Yamazaki M."/>
            <person name="Ninomiya K."/>
            <person name="Ishibashi T."/>
            <person name="Yamashita H."/>
            <person name="Murakawa K."/>
            <person name="Fujimori K."/>
            <person name="Tanai H."/>
            <person name="Kimata M."/>
            <person name="Watanabe M."/>
            <person name="Hiraoka S."/>
            <person name="Chiba Y."/>
            <person name="Ishida S."/>
            <person name="Ono Y."/>
            <person name="Takiguchi S."/>
            <person name="Watanabe S."/>
            <person name="Yosida M."/>
            <person name="Hotuta T."/>
            <person name="Kusano J."/>
            <person name="Kanehori K."/>
            <person name="Takahashi-Fujii A."/>
            <person name="Hara H."/>
            <person name="Tanase T.-O."/>
            <person name="Nomura Y."/>
            <person name="Togiya S."/>
            <person name="Komai F."/>
            <person name="Hara R."/>
            <person name="Takeuchi K."/>
            <person name="Arita M."/>
            <person name="Imose N."/>
            <person name="Musashino K."/>
            <person name="Yuuki H."/>
            <person name="Oshima A."/>
            <person name="Sasaki N."/>
            <person name="Aotsuka S."/>
            <person name="Yoshikawa Y."/>
            <person name="Matsunawa H."/>
            <person name="Ichihara T."/>
            <person name="Shiohata N."/>
            <person name="Sano S."/>
            <person name="Moriya S."/>
            <person name="Momiyama H."/>
            <person name="Satoh N."/>
            <person name="Takami S."/>
            <person name="Terashima Y."/>
            <person name="Suzuki O."/>
            <person name="Nakagawa S."/>
            <person name="Senoh A."/>
            <person name="Mizoguchi H."/>
            <person name="Goto Y."/>
            <person name="Shimizu F."/>
            <person name="Wakebe H."/>
            <person name="Hishigaki H."/>
            <person name="Watanabe T."/>
            <person name="Sugiyama A."/>
            <person name="Takemoto M."/>
            <person name="Kawakami B."/>
            <person name="Yamazaki M."/>
            <person name="Watanabe K."/>
            <person name="Kumagai A."/>
            <person name="Itakura S."/>
            <person name="Fukuzumi Y."/>
            <person name="Fujimori Y."/>
            <person name="Komiyama M."/>
            <person name="Tashiro H."/>
            <person name="Tanigami A."/>
            <person name="Fujiwara T."/>
            <person name="Ono T."/>
            <person name="Yamada K."/>
            <person name="Fujii Y."/>
            <person name="Ozaki K."/>
            <person name="Hirao M."/>
            <person name="Ohmori Y."/>
            <person name="Kawabata A."/>
            <person name="Hikiji T."/>
            <person name="Kobatake N."/>
            <person name="Inagaki H."/>
            <person name="Ikema Y."/>
            <person name="Okamoto S."/>
            <person name="Okitani R."/>
            <person name="Kawakami T."/>
            <person name="Noguchi S."/>
            <person name="Itoh T."/>
            <person name="Shigeta K."/>
            <person name="Senba T."/>
            <person name="Matsumura K."/>
            <person name="Nakajima Y."/>
            <person name="Mizuno T."/>
            <person name="Morinaga M."/>
            <person name="Sasaki M."/>
            <person name="Togashi T."/>
            <person name="Oyama M."/>
            <person name="Hata H."/>
            <person name="Watanabe M."/>
            <person name="Komatsu T."/>
            <person name="Mizushima-Sugano J."/>
            <person name="Satoh T."/>
            <person name="Shirai Y."/>
            <person name="Takahashi Y."/>
            <person name="Nakagawa K."/>
            <person name="Okumura K."/>
            <person name="Nagase T."/>
            <person name="Nomura N."/>
            <person name="Kikuchi H."/>
            <person name="Masuho Y."/>
            <person name="Yamashita R."/>
            <person name="Nakai K."/>
            <person name="Yada T."/>
            <person name="Nakamura Y."/>
            <person name="Ohara O."/>
            <person name="Isogai T."/>
            <person name="Sugano S."/>
        </authorList>
    </citation>
    <scope>NUCLEOTIDE SEQUENCE [LARGE SCALE MRNA]</scope>
    <scope>VARIANT SER-455</scope>
</reference>
<reference key="2">
    <citation type="journal article" date="2004" name="Nature">
        <title>DNA sequence and analysis of human chromosome 9.</title>
        <authorList>
            <person name="Humphray S.J."/>
            <person name="Oliver K."/>
            <person name="Hunt A.R."/>
            <person name="Plumb R.W."/>
            <person name="Loveland J.E."/>
            <person name="Howe K.L."/>
            <person name="Andrews T.D."/>
            <person name="Searle S."/>
            <person name="Hunt S.E."/>
            <person name="Scott C.E."/>
            <person name="Jones M.C."/>
            <person name="Ainscough R."/>
            <person name="Almeida J.P."/>
            <person name="Ambrose K.D."/>
            <person name="Ashwell R.I.S."/>
            <person name="Babbage A.K."/>
            <person name="Babbage S."/>
            <person name="Bagguley C.L."/>
            <person name="Bailey J."/>
            <person name="Banerjee R."/>
            <person name="Barker D.J."/>
            <person name="Barlow K.F."/>
            <person name="Bates K."/>
            <person name="Beasley H."/>
            <person name="Beasley O."/>
            <person name="Bird C.P."/>
            <person name="Bray-Allen S."/>
            <person name="Brown A.J."/>
            <person name="Brown J.Y."/>
            <person name="Burford D."/>
            <person name="Burrill W."/>
            <person name="Burton J."/>
            <person name="Carder C."/>
            <person name="Carter N.P."/>
            <person name="Chapman J.C."/>
            <person name="Chen Y."/>
            <person name="Clarke G."/>
            <person name="Clark S.Y."/>
            <person name="Clee C.M."/>
            <person name="Clegg S."/>
            <person name="Collier R.E."/>
            <person name="Corby N."/>
            <person name="Crosier M."/>
            <person name="Cummings A.T."/>
            <person name="Davies J."/>
            <person name="Dhami P."/>
            <person name="Dunn M."/>
            <person name="Dutta I."/>
            <person name="Dyer L.W."/>
            <person name="Earthrowl M.E."/>
            <person name="Faulkner L."/>
            <person name="Fleming C.J."/>
            <person name="Frankish A."/>
            <person name="Frankland J.A."/>
            <person name="French L."/>
            <person name="Fricker D.G."/>
            <person name="Garner P."/>
            <person name="Garnett J."/>
            <person name="Ghori J."/>
            <person name="Gilbert J.G.R."/>
            <person name="Glison C."/>
            <person name="Grafham D.V."/>
            <person name="Gribble S."/>
            <person name="Griffiths C."/>
            <person name="Griffiths-Jones S."/>
            <person name="Grocock R."/>
            <person name="Guy J."/>
            <person name="Hall R.E."/>
            <person name="Hammond S."/>
            <person name="Harley J.L."/>
            <person name="Harrison E.S.I."/>
            <person name="Hart E.A."/>
            <person name="Heath P.D."/>
            <person name="Henderson C.D."/>
            <person name="Hopkins B.L."/>
            <person name="Howard P.J."/>
            <person name="Howden P.J."/>
            <person name="Huckle E."/>
            <person name="Johnson C."/>
            <person name="Johnson D."/>
            <person name="Joy A.A."/>
            <person name="Kay M."/>
            <person name="Keenan S."/>
            <person name="Kershaw J.K."/>
            <person name="Kimberley A.M."/>
            <person name="King A."/>
            <person name="Knights A."/>
            <person name="Laird G.K."/>
            <person name="Langford C."/>
            <person name="Lawlor S."/>
            <person name="Leongamornlert D.A."/>
            <person name="Leversha M."/>
            <person name="Lloyd C."/>
            <person name="Lloyd D.M."/>
            <person name="Lovell J."/>
            <person name="Martin S."/>
            <person name="Mashreghi-Mohammadi M."/>
            <person name="Matthews L."/>
            <person name="McLaren S."/>
            <person name="McLay K.E."/>
            <person name="McMurray A."/>
            <person name="Milne S."/>
            <person name="Nickerson T."/>
            <person name="Nisbett J."/>
            <person name="Nordsiek G."/>
            <person name="Pearce A.V."/>
            <person name="Peck A.I."/>
            <person name="Porter K.M."/>
            <person name="Pandian R."/>
            <person name="Pelan S."/>
            <person name="Phillimore B."/>
            <person name="Povey S."/>
            <person name="Ramsey Y."/>
            <person name="Rand V."/>
            <person name="Scharfe M."/>
            <person name="Sehra H.K."/>
            <person name="Shownkeen R."/>
            <person name="Sims S.K."/>
            <person name="Skuce C.D."/>
            <person name="Smith M."/>
            <person name="Steward C.A."/>
            <person name="Swarbreck D."/>
            <person name="Sycamore N."/>
            <person name="Tester J."/>
            <person name="Thorpe A."/>
            <person name="Tracey A."/>
            <person name="Tromans A."/>
            <person name="Thomas D.W."/>
            <person name="Wall M."/>
            <person name="Wallis J.M."/>
            <person name="West A.P."/>
            <person name="Whitehead S.L."/>
            <person name="Willey D.L."/>
            <person name="Williams S.A."/>
            <person name="Wilming L."/>
            <person name="Wray P.W."/>
            <person name="Young L."/>
            <person name="Ashurst J.L."/>
            <person name="Coulson A."/>
            <person name="Blocker H."/>
            <person name="Durbin R.M."/>
            <person name="Sulston J.E."/>
            <person name="Hubbard T."/>
            <person name="Jackson M.J."/>
            <person name="Bentley D.R."/>
            <person name="Beck S."/>
            <person name="Rogers J."/>
            <person name="Dunham I."/>
        </authorList>
    </citation>
    <scope>NUCLEOTIDE SEQUENCE [LARGE SCALE GENOMIC DNA]</scope>
</reference>
<reference key="3">
    <citation type="journal article" date="2004" name="Genome Res.">
        <title>The status, quality, and expansion of the NIH full-length cDNA project: the Mammalian Gene Collection (MGC).</title>
        <authorList>
            <consortium name="The MGC Project Team"/>
        </authorList>
    </citation>
    <scope>NUCLEOTIDE SEQUENCE [LARGE SCALE MRNA]</scope>
    <scope>VARIANTS HIS-100 AND SER-455</scope>
    <source>
        <tissue>Brain</tissue>
        <tissue>Skin</tissue>
        <tissue>Testis</tissue>
        <tissue>Uterus</tissue>
    </source>
</reference>
<reference key="4">
    <citation type="journal article" date="2005" name="EMBO J.">
        <title>BLAP75, an essential component of Bloom's syndrome protein complexes that maintain genome integrity.</title>
        <authorList>
            <person name="Yin J."/>
            <person name="Sobeck A."/>
            <person name="Xu C."/>
            <person name="Meetei A.R."/>
            <person name="Hoatlin M."/>
            <person name="Li L."/>
            <person name="Wang W."/>
        </authorList>
    </citation>
    <scope>FUNCTION</scope>
    <scope>IDENTIFICATION IN COMPLEX WITH BLM AND TOP3A</scope>
    <scope>SUBCELLULAR LOCATION</scope>
</reference>
<reference key="5">
    <citation type="journal article" date="2006" name="J. Biol. Chem.">
        <title>A double Holliday junction dissolvasome comprising BLM, topoisomerase III alpha, and BLAP75.</title>
        <authorList>
            <person name="Raynard S."/>
            <person name="Bussen W."/>
            <person name="Sung P."/>
        </authorList>
    </citation>
    <scope>FUNCTION</scope>
    <scope>INTERACTION WITH BLM AND TOP3A</scope>
</reference>
<reference key="6">
    <citation type="journal article" date="2006" name="Proc. Natl. Acad. Sci. U.S.A.">
        <title>BLAP75/RMI1 promotes the BLM-dependent dissolution of homologous recombination intermediates.</title>
        <authorList>
            <person name="Wu L."/>
            <person name="Bachrati C.Z."/>
            <person name="Ou J."/>
            <person name="Xu C."/>
            <person name="Yin J."/>
            <person name="Chang M."/>
            <person name="Wang W."/>
            <person name="Li L."/>
            <person name="Brown G.W."/>
            <person name="Hickson I.D."/>
        </authorList>
    </citation>
    <scope>FUNCTION</scope>
    <scope>BINDING TO DOUBLE HOLLIDAY JUNCTION</scope>
    <scope>INTERACTION WITH TOP3A</scope>
</reference>
<reference key="7">
    <citation type="journal article" date="2008" name="Genes Dev.">
        <title>RMI, a new OB-fold complex essential for Bloom syndrome protein to maintain genome stability.</title>
        <authorList>
            <person name="Xu D."/>
            <person name="Guo R."/>
            <person name="Sobeck A."/>
            <person name="Bachrati C.Z."/>
            <person name="Yang J."/>
            <person name="Enomoto T."/>
            <person name="Brown G.W."/>
            <person name="Hoatlin M.E."/>
            <person name="Hickson I.D."/>
            <person name="Wang W."/>
        </authorList>
    </citation>
    <scope>IDENTIFICATION IN THE RMI COMPLEX</scope>
    <scope>INTERACTION WITH RMI2</scope>
</reference>
<reference key="8">
    <citation type="journal article" date="2008" name="Genes Dev.">
        <title>BLAP18/RMI2, a novel OB-fold-containing protein, is an essential component of the Bloom helicase-double Holliday junction dissolvasome.</title>
        <authorList>
            <person name="Singh T.R."/>
            <person name="Ali A.M."/>
            <person name="Busygina V."/>
            <person name="Raynard S."/>
            <person name="Fan Q."/>
            <person name="Du C.-H."/>
            <person name="Andreassen P.R."/>
            <person name="Sung P."/>
            <person name="Meetei A.R."/>
        </authorList>
    </citation>
    <scope>IDENTIFICATION IN THE RMI COMPLEX</scope>
    <scope>INTERACTION WITH RMI2</scope>
</reference>
<reference key="9">
    <citation type="journal article" date="2008" name="Proc. Natl. Acad. Sci. U.S.A.">
        <title>A quantitative atlas of mitotic phosphorylation.</title>
        <authorList>
            <person name="Dephoure N."/>
            <person name="Zhou C."/>
            <person name="Villen J."/>
            <person name="Beausoleil S.A."/>
            <person name="Bakalarski C.E."/>
            <person name="Elledge S.J."/>
            <person name="Gygi S.P."/>
        </authorList>
    </citation>
    <scope>PHOSPHORYLATION [LARGE SCALE ANALYSIS] AT SER-225</scope>
    <scope>IDENTIFICATION BY MASS SPECTROMETRY [LARGE SCALE ANALYSIS]</scope>
    <source>
        <tissue>Cervix carcinoma</tissue>
    </source>
</reference>
<reference key="10">
    <citation type="journal article" date="2012" name="Proc. Natl. Acad. Sci. U.S.A.">
        <title>N-terminal acetylome analyses and functional insights of the N-terminal acetyltransferase NatB.</title>
        <authorList>
            <person name="Van Damme P."/>
            <person name="Lasa M."/>
            <person name="Polevoda B."/>
            <person name="Gazquez C."/>
            <person name="Elosegui-Artola A."/>
            <person name="Kim D.S."/>
            <person name="De Juan-Pardo E."/>
            <person name="Demeyer K."/>
            <person name="Hole K."/>
            <person name="Larrea E."/>
            <person name="Timmerman E."/>
            <person name="Prieto J."/>
            <person name="Arnesen T."/>
            <person name="Sherman F."/>
            <person name="Gevaert K."/>
            <person name="Aldabe R."/>
        </authorList>
    </citation>
    <scope>ACETYLATION [LARGE SCALE ANALYSIS] AT MET-1</scope>
    <scope>IDENTIFICATION BY MASS SPECTROMETRY [LARGE SCALE ANALYSIS]</scope>
</reference>
<reference key="11">
    <citation type="journal article" date="2013" name="J. Proteome Res.">
        <title>Toward a comprehensive characterization of a human cancer cell phosphoproteome.</title>
        <authorList>
            <person name="Zhou H."/>
            <person name="Di Palma S."/>
            <person name="Preisinger C."/>
            <person name="Peng M."/>
            <person name="Polat A.N."/>
            <person name="Heck A.J."/>
            <person name="Mohammed S."/>
        </authorList>
    </citation>
    <scope>PHOSPHORYLATION [LARGE SCALE ANALYSIS] AT SER-284 AND SER-292</scope>
    <scope>IDENTIFICATION BY MASS SPECTROMETRY [LARGE SCALE ANALYSIS]</scope>
    <source>
        <tissue>Cervix carcinoma</tissue>
        <tissue>Erythroleukemia</tissue>
    </source>
</reference>
<reference key="12">
    <citation type="journal article" date="2013" name="Proc. Natl. Acad. Sci. U.S.A.">
        <title>Scaffolding protein SPIDR/KIAA0146 connects the Bloom syndrome helicase with homologous recombination repair.</title>
        <authorList>
            <person name="Wan L."/>
            <person name="Han J."/>
            <person name="Liu T."/>
            <person name="Dong S."/>
            <person name="Xie F."/>
            <person name="Chen H."/>
            <person name="Huang J."/>
        </authorList>
    </citation>
    <scope>INTERACTION WITH BLM</scope>
</reference>
<reference key="13">
    <citation type="journal article" date="2015" name="Mol. Cell. Proteomics">
        <title>System-wide analysis of SUMOylation dynamics in response to replication stress reveals novel small ubiquitin-like modified target proteins and acceptor lysines relevant for genome stability.</title>
        <authorList>
            <person name="Xiao Z."/>
            <person name="Chang J.G."/>
            <person name="Hendriks I.A."/>
            <person name="Sigurdsson J.O."/>
            <person name="Olsen J.V."/>
            <person name="Vertegaal A.C."/>
        </authorList>
    </citation>
    <scope>SUMOYLATION [LARGE SCALE ANALYSIS] AT LYS-426</scope>
    <scope>IDENTIFICATION BY MASS SPECTROMETRY [LARGE SCALE ANALYSIS]</scope>
</reference>
<reference key="14">
    <citation type="journal article" date="2017" name="Nat. Struct. Mol. Biol.">
        <title>Site-specific mapping of the human SUMO proteome reveals co-modification with phosphorylation.</title>
        <authorList>
            <person name="Hendriks I.A."/>
            <person name="Lyon D."/>
            <person name="Young C."/>
            <person name="Jensen L.J."/>
            <person name="Vertegaal A.C."/>
            <person name="Nielsen M.L."/>
        </authorList>
    </citation>
    <scope>SUMOYLATION [LARGE SCALE ANALYSIS] AT LYS-334; LYS-387 AND LYS-426</scope>
    <scope>IDENTIFICATION BY MASS SPECTROMETRY [LARGE SCALE ANALYSIS]</scope>
</reference>
<protein>
    <recommendedName>
        <fullName>RecQ-mediated genome instability protein 1</fullName>
    </recommendedName>
    <alternativeName>
        <fullName>BLM-associated protein of 75 kDa</fullName>
        <shortName>BLAP75</shortName>
    </alternativeName>
    <alternativeName>
        <fullName>FAAP75</fullName>
    </alternativeName>
</protein>
<sequence>MNVTSIALRAETWLLAAWHVKVPPMWLEACINWIQEENNNVNLSQAQMNKQVFEQWLLTDLRDLEHPLLPDGILEIPKGELNGFYALQINSLVDVSQPAYSQIQKLRGKNTTNDLVTAEAQVTPKPWEAKPSRMLMLQLTDGIVQIQGMEYQPIPILHSDLPPGTKILIYGNISFRLGVLLLKPENVKVLGGEVDALLEEYAQEKVLARLIGEPDLVVSVIPNNSNENIPRVTDVLDPALGPSDEELLASLDENDELTANNDTSSERCFTTGSSSNTIPTRQSSFEPEFVISPRPKEEPSNLSIHVMDGELDDFSLEEALLLEETVQKEQMETKELQPLTFNRNADRSIERFSHNPNTTNNFSLTCKNGNNNWSEKNVSEQMTNEDKSFGCPSVRDQNRSIFSVHCNVPLAHDFTNKEKNLETDNKIKQTSSSDSHSLNNKILNREVVNYVQKRNSQISNENDCNLQSCSLRSSENSINLSIAMDLYSPPFVYLSVLMASKPKEVTTVKVKAFIVTLTGNLSSSGGIWSITAKVSDGTAYLDVDFVDEILTSLIGFSVPEMKQSKKDPLQYQKFLEGLQKCQRDLIDLCCLMTISFNPSLSKAMVLALQDVNMEHLENLKKRLNK</sequence>